<evidence type="ECO:0000255" key="1">
    <source>
        <dbReference type="HAMAP-Rule" id="MF_02111"/>
    </source>
</evidence>
<reference key="1">
    <citation type="journal article" date="2010" name="J. Bacteriol.">
        <title>Genome sequence of the Fleming strain of Micrococcus luteus, a simple free-living actinobacterium.</title>
        <authorList>
            <person name="Young M."/>
            <person name="Artsatbanov V."/>
            <person name="Beller H.R."/>
            <person name="Chandra G."/>
            <person name="Chater K.F."/>
            <person name="Dover L.G."/>
            <person name="Goh E.B."/>
            <person name="Kahan T."/>
            <person name="Kaprelyants A.S."/>
            <person name="Kyrpides N."/>
            <person name="Lapidus A."/>
            <person name="Lowry S.R."/>
            <person name="Lykidis A."/>
            <person name="Mahillon J."/>
            <person name="Markowitz V."/>
            <person name="Mavromatis K."/>
            <person name="Mukamolova G.V."/>
            <person name="Oren A."/>
            <person name="Rokem J.S."/>
            <person name="Smith M.C."/>
            <person name="Young D.I."/>
            <person name="Greenblatt C.L."/>
        </authorList>
    </citation>
    <scope>NUCLEOTIDE SEQUENCE [LARGE SCALE GENOMIC DNA]</scope>
    <source>
        <strain>ATCC 4698 / DSM 20030 / JCM 1464 / CCM 169 / CCUG 5858 / IAM 1056 / NBRC 3333 / NCIMB 9278 / NCTC 2665 / VKM Ac-2230</strain>
    </source>
</reference>
<keyword id="KW-0067">ATP-binding</keyword>
<keyword id="KW-0436">Ligase</keyword>
<keyword id="KW-0460">Magnesium</keyword>
<keyword id="KW-0479">Metal-binding</keyword>
<keyword id="KW-0547">Nucleotide-binding</keyword>
<keyword id="KW-1185">Reference proteome</keyword>
<keyword id="KW-0833">Ubl conjugation pathway</keyword>
<sequence length="464" mass="51898">MTDADRARRIFGLETEYGVQHWNPEGRPLSPEEVVRYLFRPVVEWGRSSNVFVANGSRLYLDVGSHPEYATAECSTLDELIASDGAGDLLLHDLVVQAEERMAADGVGGRIHLYRNNADSSGSSYGSHENYLLRRRTEYRRLTEALVPFLVSRQILVGAGRVVPAGTWPEGEGPAHFAFSQRADFVQDGVSSSTTRSRPIINTRDEPHADASEYRRLHVIVGDTNLSEHTHLLRFGATDLLLRMIEAGFPLGDRVVAHPTRAVRQISHDLTGTARIALREGEASALELQEHYLERARAFVAAEGAHHDRVGEILTLWGEVLDAVRTGDRSRIEDRIDWAIKLRLLEDYRARHDLGWDAPRLAQLDLAFHDIDPDRGLFRLLLRRGAVARLLPEDAARSAVETAPPTTRARVRADFVARARERGLDYAVDWTTLKLTDHPLHAIVTKDPFDTSSAAVDRLFGRIA</sequence>
<accession>C5CBV0</accession>
<dbReference type="EC" id="6.3.1.19" evidence="1"/>
<dbReference type="EMBL" id="CP001628">
    <property type="protein sequence ID" value="ACS30697.1"/>
    <property type="molecule type" value="Genomic_DNA"/>
</dbReference>
<dbReference type="RefSeq" id="WP_010078661.1">
    <property type="nucleotide sequence ID" value="NC_012803.1"/>
</dbReference>
<dbReference type="SMR" id="C5CBV0"/>
<dbReference type="STRING" id="465515.Mlut_11920"/>
<dbReference type="EnsemblBacteria" id="ACS30697">
    <property type="protein sequence ID" value="ACS30697"/>
    <property type="gene ID" value="Mlut_11920"/>
</dbReference>
<dbReference type="GeneID" id="93345349"/>
<dbReference type="KEGG" id="mlu:Mlut_11920"/>
<dbReference type="PATRIC" id="fig|465515.4.peg.1133"/>
<dbReference type="eggNOG" id="COG0638">
    <property type="taxonomic scope" value="Bacteria"/>
</dbReference>
<dbReference type="HOGENOM" id="CLU_040524_0_1_11"/>
<dbReference type="BRENDA" id="6.3.1.19">
    <property type="organism ID" value="3348"/>
</dbReference>
<dbReference type="UniPathway" id="UPA00997"/>
<dbReference type="UniPathway" id="UPA00998"/>
<dbReference type="Proteomes" id="UP000000738">
    <property type="component" value="Chromosome"/>
</dbReference>
<dbReference type="GO" id="GO:0005524">
    <property type="term" value="F:ATP binding"/>
    <property type="evidence" value="ECO:0007669"/>
    <property type="project" value="UniProtKB-UniRule"/>
</dbReference>
<dbReference type="GO" id="GO:0016879">
    <property type="term" value="F:ligase activity, forming carbon-nitrogen bonds"/>
    <property type="evidence" value="ECO:0007669"/>
    <property type="project" value="InterPro"/>
</dbReference>
<dbReference type="GO" id="GO:0000287">
    <property type="term" value="F:magnesium ion binding"/>
    <property type="evidence" value="ECO:0007669"/>
    <property type="project" value="UniProtKB-UniRule"/>
</dbReference>
<dbReference type="GO" id="GO:0019787">
    <property type="term" value="F:ubiquitin-like protein transferase activity"/>
    <property type="evidence" value="ECO:0007669"/>
    <property type="project" value="UniProtKB-UniRule"/>
</dbReference>
<dbReference type="GO" id="GO:0019941">
    <property type="term" value="P:modification-dependent protein catabolic process"/>
    <property type="evidence" value="ECO:0007669"/>
    <property type="project" value="UniProtKB-UniRule"/>
</dbReference>
<dbReference type="GO" id="GO:0010498">
    <property type="term" value="P:proteasomal protein catabolic process"/>
    <property type="evidence" value="ECO:0007669"/>
    <property type="project" value="UniProtKB-UniRule"/>
</dbReference>
<dbReference type="GO" id="GO:0070490">
    <property type="term" value="P:protein pupylation"/>
    <property type="evidence" value="ECO:0007669"/>
    <property type="project" value="UniProtKB-UniRule"/>
</dbReference>
<dbReference type="HAMAP" id="MF_02111">
    <property type="entry name" value="Pup_ligase"/>
    <property type="match status" value="1"/>
</dbReference>
<dbReference type="InterPro" id="IPR022279">
    <property type="entry name" value="Pup_ligase"/>
</dbReference>
<dbReference type="InterPro" id="IPR004347">
    <property type="entry name" value="Pup_ligase/deamidase"/>
</dbReference>
<dbReference type="NCBIfam" id="TIGR03686">
    <property type="entry name" value="pupylate_PafA"/>
    <property type="match status" value="1"/>
</dbReference>
<dbReference type="PANTHER" id="PTHR42307">
    <property type="entry name" value="PUP DEAMIDASE/DEPUPYLASE"/>
    <property type="match status" value="1"/>
</dbReference>
<dbReference type="PANTHER" id="PTHR42307:SF3">
    <property type="entry name" value="PUP--PROTEIN LIGASE"/>
    <property type="match status" value="1"/>
</dbReference>
<dbReference type="Pfam" id="PF03136">
    <property type="entry name" value="Pup_ligase"/>
    <property type="match status" value="1"/>
</dbReference>
<name>PAFA_MICLC</name>
<comment type="function">
    <text evidence="1">Catalyzes the covalent attachment of the prokaryotic ubiquitin-like protein modifier Pup to the proteasomal substrate proteins, thereby targeting them for proteasomal degradation. This tagging system is termed pupylation. The ligation reaction involves the side-chain carboxylate of the C-terminal glutamate of Pup and the side-chain amino group of a substrate lysine.</text>
</comment>
<comment type="catalytic activity">
    <reaction evidence="1">
        <text>ATP + [prokaryotic ubiquitin-like protein]-L-glutamate + [protein]-L-lysine = ADP + phosphate + N(6)-([prokaryotic ubiquitin-like protein]-gamma-L-glutamyl)-[protein]-L-lysine.</text>
        <dbReference type="EC" id="6.3.1.19"/>
    </reaction>
</comment>
<comment type="pathway">
    <text evidence="1">Protein degradation; proteasomal Pup-dependent pathway.</text>
</comment>
<comment type="pathway">
    <text evidence="1">Protein modification; protein pupylation.</text>
</comment>
<comment type="miscellaneous">
    <text evidence="1">The reaction mechanism probably proceeds via the activation of Pup by phosphorylation of its C-terminal glutamate, which is then subject to nucleophilic attack by the substrate lysine, resulting in an isopeptide bond and the release of phosphate as a good leaving group.</text>
</comment>
<comment type="similarity">
    <text evidence="1">Belongs to the Pup ligase/Pup deamidase family. Pup-conjugating enzyme subfamily.</text>
</comment>
<organism>
    <name type="scientific">Micrococcus luteus (strain ATCC 4698 / DSM 20030 / JCM 1464 / CCM 169 / CCUG 5858 / IAM 1056 / NBRC 3333 / NCIMB 9278 / NCTC 2665 / VKM Ac-2230)</name>
    <name type="common">Micrococcus lysodeikticus</name>
    <dbReference type="NCBI Taxonomy" id="465515"/>
    <lineage>
        <taxon>Bacteria</taxon>
        <taxon>Bacillati</taxon>
        <taxon>Actinomycetota</taxon>
        <taxon>Actinomycetes</taxon>
        <taxon>Micrococcales</taxon>
        <taxon>Micrococcaceae</taxon>
        <taxon>Micrococcus</taxon>
    </lineage>
</organism>
<protein>
    <recommendedName>
        <fullName evidence="1">Pup--protein ligase</fullName>
        <ecNumber evidence="1">6.3.1.19</ecNumber>
    </recommendedName>
    <alternativeName>
        <fullName evidence="1">Proteasome accessory factor A</fullName>
    </alternativeName>
    <alternativeName>
        <fullName evidence="1">Pup-conjugating enzyme</fullName>
    </alternativeName>
</protein>
<proteinExistence type="inferred from homology"/>
<gene>
    <name evidence="1" type="primary">pafA</name>
    <name type="ordered locus">Mlut_11920</name>
</gene>
<feature type="chain" id="PRO_0000395922" description="Pup--protein ligase">
    <location>
        <begin position="1"/>
        <end position="464"/>
    </location>
</feature>
<feature type="active site" description="Proton acceptor" evidence="1">
    <location>
        <position position="62"/>
    </location>
</feature>
<feature type="binding site" evidence="1">
    <location>
        <position position="14"/>
    </location>
    <ligand>
        <name>Mg(2+)</name>
        <dbReference type="ChEBI" id="CHEBI:18420"/>
    </ligand>
</feature>
<feature type="binding site" evidence="1">
    <location>
        <position position="58"/>
    </location>
    <ligand>
        <name>ATP</name>
        <dbReference type="ChEBI" id="CHEBI:30616"/>
    </ligand>
</feature>
<feature type="binding site" evidence="1">
    <location>
        <position position="60"/>
    </location>
    <ligand>
        <name>Mg(2+)</name>
        <dbReference type="ChEBI" id="CHEBI:18420"/>
    </ligand>
</feature>
<feature type="binding site" evidence="1">
    <location>
        <position position="68"/>
    </location>
    <ligand>
        <name>Mg(2+)</name>
        <dbReference type="ChEBI" id="CHEBI:18420"/>
    </ligand>
</feature>
<feature type="binding site" evidence="1">
    <location>
        <position position="71"/>
    </location>
    <ligand>
        <name>ATP</name>
        <dbReference type="ChEBI" id="CHEBI:30616"/>
    </ligand>
</feature>
<feature type="binding site" evidence="1">
    <location>
        <position position="430"/>
    </location>
    <ligand>
        <name>ATP</name>
        <dbReference type="ChEBI" id="CHEBI:30616"/>
    </ligand>
</feature>